<protein>
    <recommendedName>
        <fullName>WD repeat-containing protein 53</fullName>
    </recommendedName>
</protein>
<accession>Q7Z5U6</accession>
<accession>A0MNP1</accession>
<organism>
    <name type="scientific">Homo sapiens</name>
    <name type="common">Human</name>
    <dbReference type="NCBI Taxonomy" id="9606"/>
    <lineage>
        <taxon>Eukaryota</taxon>
        <taxon>Metazoa</taxon>
        <taxon>Chordata</taxon>
        <taxon>Craniata</taxon>
        <taxon>Vertebrata</taxon>
        <taxon>Euteleostomi</taxon>
        <taxon>Mammalia</taxon>
        <taxon>Eutheria</taxon>
        <taxon>Euarchontoglires</taxon>
        <taxon>Primates</taxon>
        <taxon>Haplorrhini</taxon>
        <taxon>Catarrhini</taxon>
        <taxon>Hominidae</taxon>
        <taxon>Homo</taxon>
    </lineage>
</organism>
<dbReference type="EMBL" id="EF011620">
    <property type="protein sequence ID" value="ABK41110.1"/>
    <property type="molecule type" value="mRNA"/>
</dbReference>
<dbReference type="EMBL" id="AK314105">
    <property type="protein sequence ID" value="BAG36798.1"/>
    <property type="molecule type" value="mRNA"/>
</dbReference>
<dbReference type="EMBL" id="CH471191">
    <property type="protein sequence ID" value="EAW53646.1"/>
    <property type="molecule type" value="Genomic_DNA"/>
</dbReference>
<dbReference type="EMBL" id="CH471191">
    <property type="protein sequence ID" value="EAW53647.1"/>
    <property type="molecule type" value="Genomic_DNA"/>
</dbReference>
<dbReference type="EMBL" id="BC054030">
    <property type="protein sequence ID" value="AAH54030.1"/>
    <property type="molecule type" value="mRNA"/>
</dbReference>
<dbReference type="CCDS" id="CCDS3318.1"/>
<dbReference type="RefSeq" id="NP_001332835.1">
    <property type="nucleotide sequence ID" value="NM_001345906.2"/>
</dbReference>
<dbReference type="RefSeq" id="NP_001332836.1">
    <property type="nucleotide sequence ID" value="NM_001345907.2"/>
</dbReference>
<dbReference type="RefSeq" id="NP_001332837.1">
    <property type="nucleotide sequence ID" value="NM_001345908.2"/>
</dbReference>
<dbReference type="RefSeq" id="NP_001332838.1">
    <property type="nucleotide sequence ID" value="NM_001345909.2"/>
</dbReference>
<dbReference type="RefSeq" id="NP_001332839.1">
    <property type="nucleotide sequence ID" value="NM_001345910.2"/>
</dbReference>
<dbReference type="RefSeq" id="NP_872433.1">
    <property type="nucleotide sequence ID" value="NM_182627.3"/>
</dbReference>
<dbReference type="RefSeq" id="XP_047304035.1">
    <property type="nucleotide sequence ID" value="XM_047448079.1"/>
</dbReference>
<dbReference type="RefSeq" id="XP_054202413.1">
    <property type="nucleotide sequence ID" value="XM_054346438.1"/>
</dbReference>
<dbReference type="SMR" id="Q7Z5U6"/>
<dbReference type="BioGRID" id="131531">
    <property type="interactions" value="28"/>
</dbReference>
<dbReference type="FunCoup" id="Q7Z5U6">
    <property type="interactions" value="1997"/>
</dbReference>
<dbReference type="IntAct" id="Q7Z5U6">
    <property type="interactions" value="7"/>
</dbReference>
<dbReference type="STRING" id="9606.ENSP00000328079"/>
<dbReference type="iPTMnet" id="Q7Z5U6"/>
<dbReference type="PhosphoSitePlus" id="Q7Z5U6"/>
<dbReference type="BioMuta" id="WDR53"/>
<dbReference type="DMDM" id="74762439"/>
<dbReference type="jPOST" id="Q7Z5U6"/>
<dbReference type="MassIVE" id="Q7Z5U6"/>
<dbReference type="PaxDb" id="9606-ENSP00000328079"/>
<dbReference type="PeptideAtlas" id="Q7Z5U6"/>
<dbReference type="ProteomicsDB" id="69354"/>
<dbReference type="Pumba" id="Q7Z5U6"/>
<dbReference type="Antibodypedia" id="2878">
    <property type="antibodies" value="62 antibodies from 17 providers"/>
</dbReference>
<dbReference type="DNASU" id="348793"/>
<dbReference type="Ensembl" id="ENST00000332629.7">
    <property type="protein sequence ID" value="ENSP00000328079.5"/>
    <property type="gene ID" value="ENSG00000185798.8"/>
</dbReference>
<dbReference type="GeneID" id="348793"/>
<dbReference type="KEGG" id="hsa:348793"/>
<dbReference type="MANE-Select" id="ENST00000332629.7">
    <property type="protein sequence ID" value="ENSP00000328079.5"/>
    <property type="RefSeq nucleotide sequence ID" value="NM_182627.3"/>
    <property type="RefSeq protein sequence ID" value="NP_872433.1"/>
</dbReference>
<dbReference type="UCSC" id="uc003fwt.4">
    <property type="organism name" value="human"/>
</dbReference>
<dbReference type="AGR" id="HGNC:28786"/>
<dbReference type="CTD" id="348793"/>
<dbReference type="DisGeNET" id="348793"/>
<dbReference type="GeneCards" id="WDR53"/>
<dbReference type="HGNC" id="HGNC:28786">
    <property type="gene designation" value="WDR53"/>
</dbReference>
<dbReference type="HPA" id="ENSG00000185798">
    <property type="expression patterns" value="Tissue enriched (testis)"/>
</dbReference>
<dbReference type="MIM" id="615110">
    <property type="type" value="gene"/>
</dbReference>
<dbReference type="neXtProt" id="NX_Q7Z5U6"/>
<dbReference type="OpenTargets" id="ENSG00000185798"/>
<dbReference type="PharmGKB" id="PA134948456"/>
<dbReference type="VEuPathDB" id="HostDB:ENSG00000185798"/>
<dbReference type="eggNOG" id="ENOG502QQ86">
    <property type="taxonomic scope" value="Eukaryota"/>
</dbReference>
<dbReference type="GeneTree" id="ENSGT00390000011073"/>
<dbReference type="HOGENOM" id="CLU_057939_1_0_1"/>
<dbReference type="InParanoid" id="Q7Z5U6"/>
<dbReference type="OMA" id="GDLMVWG"/>
<dbReference type="OrthoDB" id="2161379at2759"/>
<dbReference type="PAN-GO" id="Q7Z5U6">
    <property type="GO annotations" value="0 GO annotations based on evolutionary models"/>
</dbReference>
<dbReference type="PhylomeDB" id="Q7Z5U6"/>
<dbReference type="TreeFam" id="TF331160"/>
<dbReference type="PathwayCommons" id="Q7Z5U6"/>
<dbReference type="SignaLink" id="Q7Z5U6"/>
<dbReference type="BioGRID-ORCS" id="348793">
    <property type="hits" value="20 hits in 1161 CRISPR screens"/>
</dbReference>
<dbReference type="ChiTaRS" id="WDR53">
    <property type="organism name" value="human"/>
</dbReference>
<dbReference type="GenomeRNAi" id="348793"/>
<dbReference type="Pharos" id="Q7Z5U6">
    <property type="development level" value="Tdark"/>
</dbReference>
<dbReference type="PRO" id="PR:Q7Z5U6"/>
<dbReference type="Proteomes" id="UP000005640">
    <property type="component" value="Chromosome 3"/>
</dbReference>
<dbReference type="RNAct" id="Q7Z5U6">
    <property type="molecule type" value="protein"/>
</dbReference>
<dbReference type="Bgee" id="ENSG00000185798">
    <property type="expression patterns" value="Expressed in left testis and 174 other cell types or tissues"/>
</dbReference>
<dbReference type="ExpressionAtlas" id="Q7Z5U6">
    <property type="expression patterns" value="baseline and differential"/>
</dbReference>
<dbReference type="Gene3D" id="2.130.10.10">
    <property type="entry name" value="YVTN repeat-like/Quinoprotein amine dehydrogenase"/>
    <property type="match status" value="2"/>
</dbReference>
<dbReference type="InterPro" id="IPR015943">
    <property type="entry name" value="WD40/YVTN_repeat-like_dom_sf"/>
</dbReference>
<dbReference type="InterPro" id="IPR019775">
    <property type="entry name" value="WD40_repeat_CS"/>
</dbReference>
<dbReference type="InterPro" id="IPR036322">
    <property type="entry name" value="WD40_repeat_dom_sf"/>
</dbReference>
<dbReference type="InterPro" id="IPR001680">
    <property type="entry name" value="WD40_rpt"/>
</dbReference>
<dbReference type="InterPro" id="IPR042453">
    <property type="entry name" value="WDR53"/>
</dbReference>
<dbReference type="PANTHER" id="PTHR44666">
    <property type="entry name" value="WD REPEAT-CONTAINING PROTEIN 53"/>
    <property type="match status" value="1"/>
</dbReference>
<dbReference type="PANTHER" id="PTHR44666:SF1">
    <property type="entry name" value="WD REPEAT-CONTAINING PROTEIN 53"/>
    <property type="match status" value="1"/>
</dbReference>
<dbReference type="Pfam" id="PF23761">
    <property type="entry name" value="Beta-prop_DCAF4"/>
    <property type="match status" value="1"/>
</dbReference>
<dbReference type="Pfam" id="PF00400">
    <property type="entry name" value="WD40"/>
    <property type="match status" value="1"/>
</dbReference>
<dbReference type="SMART" id="SM00320">
    <property type="entry name" value="WD40"/>
    <property type="match status" value="6"/>
</dbReference>
<dbReference type="SUPFAM" id="SSF50978">
    <property type="entry name" value="WD40 repeat-like"/>
    <property type="match status" value="1"/>
</dbReference>
<dbReference type="PROSITE" id="PS00678">
    <property type="entry name" value="WD_REPEATS_1"/>
    <property type="match status" value="1"/>
</dbReference>
<dbReference type="PROSITE" id="PS50082">
    <property type="entry name" value="WD_REPEATS_2"/>
    <property type="match status" value="2"/>
</dbReference>
<dbReference type="PROSITE" id="PS50294">
    <property type="entry name" value="WD_REPEATS_REGION"/>
    <property type="match status" value="1"/>
</dbReference>
<name>WDR53_HUMAN</name>
<reference key="1">
    <citation type="journal article" date="2006" name="Nat. Cell Biol.">
        <title>CUL4-DDB1 ubiquitin ligase interacts with multiple WD40-repeat proteins and regulates histone methylation.</title>
        <authorList>
            <person name="Higa L.A."/>
            <person name="Wu M."/>
            <person name="Ye T."/>
            <person name="Kobayashi R."/>
            <person name="Sun H."/>
            <person name="Zhang H."/>
        </authorList>
    </citation>
    <scope>NUCLEOTIDE SEQUENCE [MRNA]</scope>
</reference>
<reference key="2">
    <citation type="journal article" date="2004" name="Nat. Genet.">
        <title>Complete sequencing and characterization of 21,243 full-length human cDNAs.</title>
        <authorList>
            <person name="Ota T."/>
            <person name="Suzuki Y."/>
            <person name="Nishikawa T."/>
            <person name="Otsuki T."/>
            <person name="Sugiyama T."/>
            <person name="Irie R."/>
            <person name="Wakamatsu A."/>
            <person name="Hayashi K."/>
            <person name="Sato H."/>
            <person name="Nagai K."/>
            <person name="Kimura K."/>
            <person name="Makita H."/>
            <person name="Sekine M."/>
            <person name="Obayashi M."/>
            <person name="Nishi T."/>
            <person name="Shibahara T."/>
            <person name="Tanaka T."/>
            <person name="Ishii S."/>
            <person name="Yamamoto J."/>
            <person name="Saito K."/>
            <person name="Kawai Y."/>
            <person name="Isono Y."/>
            <person name="Nakamura Y."/>
            <person name="Nagahari K."/>
            <person name="Murakami K."/>
            <person name="Yasuda T."/>
            <person name="Iwayanagi T."/>
            <person name="Wagatsuma M."/>
            <person name="Shiratori A."/>
            <person name="Sudo H."/>
            <person name="Hosoiri T."/>
            <person name="Kaku Y."/>
            <person name="Kodaira H."/>
            <person name="Kondo H."/>
            <person name="Sugawara M."/>
            <person name="Takahashi M."/>
            <person name="Kanda K."/>
            <person name="Yokoi T."/>
            <person name="Furuya T."/>
            <person name="Kikkawa E."/>
            <person name="Omura Y."/>
            <person name="Abe K."/>
            <person name="Kamihara K."/>
            <person name="Katsuta N."/>
            <person name="Sato K."/>
            <person name="Tanikawa M."/>
            <person name="Yamazaki M."/>
            <person name="Ninomiya K."/>
            <person name="Ishibashi T."/>
            <person name="Yamashita H."/>
            <person name="Murakawa K."/>
            <person name="Fujimori K."/>
            <person name="Tanai H."/>
            <person name="Kimata M."/>
            <person name="Watanabe M."/>
            <person name="Hiraoka S."/>
            <person name="Chiba Y."/>
            <person name="Ishida S."/>
            <person name="Ono Y."/>
            <person name="Takiguchi S."/>
            <person name="Watanabe S."/>
            <person name="Yosida M."/>
            <person name="Hotuta T."/>
            <person name="Kusano J."/>
            <person name="Kanehori K."/>
            <person name="Takahashi-Fujii A."/>
            <person name="Hara H."/>
            <person name="Tanase T.-O."/>
            <person name="Nomura Y."/>
            <person name="Togiya S."/>
            <person name="Komai F."/>
            <person name="Hara R."/>
            <person name="Takeuchi K."/>
            <person name="Arita M."/>
            <person name="Imose N."/>
            <person name="Musashino K."/>
            <person name="Yuuki H."/>
            <person name="Oshima A."/>
            <person name="Sasaki N."/>
            <person name="Aotsuka S."/>
            <person name="Yoshikawa Y."/>
            <person name="Matsunawa H."/>
            <person name="Ichihara T."/>
            <person name="Shiohata N."/>
            <person name="Sano S."/>
            <person name="Moriya S."/>
            <person name="Momiyama H."/>
            <person name="Satoh N."/>
            <person name="Takami S."/>
            <person name="Terashima Y."/>
            <person name="Suzuki O."/>
            <person name="Nakagawa S."/>
            <person name="Senoh A."/>
            <person name="Mizoguchi H."/>
            <person name="Goto Y."/>
            <person name="Shimizu F."/>
            <person name="Wakebe H."/>
            <person name="Hishigaki H."/>
            <person name="Watanabe T."/>
            <person name="Sugiyama A."/>
            <person name="Takemoto M."/>
            <person name="Kawakami B."/>
            <person name="Yamazaki M."/>
            <person name="Watanabe K."/>
            <person name="Kumagai A."/>
            <person name="Itakura S."/>
            <person name="Fukuzumi Y."/>
            <person name="Fujimori Y."/>
            <person name="Komiyama M."/>
            <person name="Tashiro H."/>
            <person name="Tanigami A."/>
            <person name="Fujiwara T."/>
            <person name="Ono T."/>
            <person name="Yamada K."/>
            <person name="Fujii Y."/>
            <person name="Ozaki K."/>
            <person name="Hirao M."/>
            <person name="Ohmori Y."/>
            <person name="Kawabata A."/>
            <person name="Hikiji T."/>
            <person name="Kobatake N."/>
            <person name="Inagaki H."/>
            <person name="Ikema Y."/>
            <person name="Okamoto S."/>
            <person name="Okitani R."/>
            <person name="Kawakami T."/>
            <person name="Noguchi S."/>
            <person name="Itoh T."/>
            <person name="Shigeta K."/>
            <person name="Senba T."/>
            <person name="Matsumura K."/>
            <person name="Nakajima Y."/>
            <person name="Mizuno T."/>
            <person name="Morinaga M."/>
            <person name="Sasaki M."/>
            <person name="Togashi T."/>
            <person name="Oyama M."/>
            <person name="Hata H."/>
            <person name="Watanabe M."/>
            <person name="Komatsu T."/>
            <person name="Mizushima-Sugano J."/>
            <person name="Satoh T."/>
            <person name="Shirai Y."/>
            <person name="Takahashi Y."/>
            <person name="Nakagawa K."/>
            <person name="Okumura K."/>
            <person name="Nagase T."/>
            <person name="Nomura N."/>
            <person name="Kikuchi H."/>
            <person name="Masuho Y."/>
            <person name="Yamashita R."/>
            <person name="Nakai K."/>
            <person name="Yada T."/>
            <person name="Nakamura Y."/>
            <person name="Ohara O."/>
            <person name="Isogai T."/>
            <person name="Sugano S."/>
        </authorList>
    </citation>
    <scope>NUCLEOTIDE SEQUENCE [LARGE SCALE MRNA]</scope>
    <source>
        <tissue>Cerebellum</tissue>
    </source>
</reference>
<reference key="3">
    <citation type="submission" date="2005-09" db="EMBL/GenBank/DDBJ databases">
        <authorList>
            <person name="Mural R.J."/>
            <person name="Istrail S."/>
            <person name="Sutton G."/>
            <person name="Florea L."/>
            <person name="Halpern A.L."/>
            <person name="Mobarry C.M."/>
            <person name="Lippert R."/>
            <person name="Walenz B."/>
            <person name="Shatkay H."/>
            <person name="Dew I."/>
            <person name="Miller J.R."/>
            <person name="Flanigan M.J."/>
            <person name="Edwards N.J."/>
            <person name="Bolanos R."/>
            <person name="Fasulo D."/>
            <person name="Halldorsson B.V."/>
            <person name="Hannenhalli S."/>
            <person name="Turner R."/>
            <person name="Yooseph S."/>
            <person name="Lu F."/>
            <person name="Nusskern D.R."/>
            <person name="Shue B.C."/>
            <person name="Zheng X.H."/>
            <person name="Zhong F."/>
            <person name="Delcher A.L."/>
            <person name="Huson D.H."/>
            <person name="Kravitz S.A."/>
            <person name="Mouchard L."/>
            <person name="Reinert K."/>
            <person name="Remington K.A."/>
            <person name="Clark A.G."/>
            <person name="Waterman M.S."/>
            <person name="Eichler E.E."/>
            <person name="Adams M.D."/>
            <person name="Hunkapiller M.W."/>
            <person name="Myers E.W."/>
            <person name="Venter J.C."/>
        </authorList>
    </citation>
    <scope>NUCLEOTIDE SEQUENCE [LARGE SCALE GENOMIC DNA]</scope>
</reference>
<reference key="4">
    <citation type="journal article" date="2004" name="Genome Res.">
        <title>The status, quality, and expansion of the NIH full-length cDNA project: the Mammalian Gene Collection (MGC).</title>
        <authorList>
            <consortium name="The MGC Project Team"/>
        </authorList>
    </citation>
    <scope>NUCLEOTIDE SEQUENCE [LARGE SCALE MRNA]</scope>
    <source>
        <tissue>Eye</tissue>
    </source>
</reference>
<reference key="5">
    <citation type="journal article" date="2006" name="Science">
        <title>The consensus coding sequences of human breast and colorectal cancers.</title>
        <authorList>
            <person name="Sjoeblom T."/>
            <person name="Jones S."/>
            <person name="Wood L.D."/>
            <person name="Parsons D.W."/>
            <person name="Lin J."/>
            <person name="Barber T.D."/>
            <person name="Mandelker D."/>
            <person name="Leary R.J."/>
            <person name="Ptak J."/>
            <person name="Silliman N."/>
            <person name="Szabo S."/>
            <person name="Buckhaults P."/>
            <person name="Farrell C."/>
            <person name="Meeh P."/>
            <person name="Markowitz S.D."/>
            <person name="Willis J."/>
            <person name="Dawson D."/>
            <person name="Willson J.K.V."/>
            <person name="Gazdar A.F."/>
            <person name="Hartigan J."/>
            <person name="Wu L."/>
            <person name="Liu C."/>
            <person name="Parmigiani G."/>
            <person name="Park B.H."/>
            <person name="Bachman K.E."/>
            <person name="Papadopoulos N."/>
            <person name="Vogelstein B."/>
            <person name="Kinzler K.W."/>
            <person name="Velculescu V.E."/>
        </authorList>
    </citation>
    <scope>VARIANT [LARGE SCALE ANALYSIS] CYS-60</scope>
</reference>
<sequence length="358" mass="38989">MAVKWTGGHSSPVLCLNASKEGLLASGAEGGDLTAWGEDGTPLGHTRFQGADDVTSVLFSPSCPTKLYASHGETISVLDVRSLKDSLDHFHVNEEEINCLSLNQTENLLASADDSGAIKILDLENKKVIRSLKRHSNICSSVAFRPQRPQSLVSCGLDMQVMLWSLQKARPLWITNLQEDETEEMEGPQSPGQLLNPALAHSISVASCGNIFSCGAEDGKVRIFRVMGVKCEQELGFKGHTSGVSQVCFLPESYLLLTGGNDGKITLWDANSEVEKKQKSPTKRTHRKKPKRGTCTKQGGNTNASVTDEEEHGNILPKLNIEHGEKVNWLLGTKIKGHQNILVADQTSCISVYPLNEF</sequence>
<evidence type="ECO:0000256" key="1">
    <source>
        <dbReference type="SAM" id="MobiDB-lite"/>
    </source>
</evidence>
<evidence type="ECO:0000269" key="2">
    <source>
    </source>
</evidence>
<evidence type="ECO:0000305" key="3"/>
<proteinExistence type="evidence at protein level"/>
<keyword id="KW-1267">Proteomics identification</keyword>
<keyword id="KW-1185">Reference proteome</keyword>
<keyword id="KW-0677">Repeat</keyword>
<keyword id="KW-0853">WD repeat</keyword>
<comment type="similarity">
    <text evidence="3">Belongs to the WD repeat WDR53 family.</text>
</comment>
<gene>
    <name type="primary">WDR53</name>
</gene>
<feature type="chain" id="PRO_0000051413" description="WD repeat-containing protein 53">
    <location>
        <begin position="1"/>
        <end position="358"/>
    </location>
</feature>
<feature type="repeat" description="WD 1">
    <location>
        <begin position="1"/>
        <end position="38"/>
    </location>
</feature>
<feature type="repeat" description="WD 2">
    <location>
        <begin position="43"/>
        <end position="80"/>
    </location>
</feature>
<feature type="repeat" description="WD 3">
    <location>
        <begin position="85"/>
        <end position="123"/>
    </location>
</feature>
<feature type="repeat" description="WD 4">
    <location>
        <begin position="127"/>
        <end position="166"/>
    </location>
</feature>
<feature type="repeat" description="WD 5">
    <location>
        <begin position="173"/>
        <end position="225"/>
    </location>
</feature>
<feature type="repeat" description="WD 6">
    <location>
        <begin position="232"/>
        <end position="270"/>
    </location>
</feature>
<feature type="repeat" description="WD 7">
    <location>
        <begin position="314"/>
        <end position="355"/>
    </location>
</feature>
<feature type="region of interest" description="Disordered" evidence="1">
    <location>
        <begin position="273"/>
        <end position="311"/>
    </location>
</feature>
<feature type="compositionally biased region" description="Basic residues" evidence="1">
    <location>
        <begin position="279"/>
        <end position="294"/>
    </location>
</feature>
<feature type="compositionally biased region" description="Polar residues" evidence="1">
    <location>
        <begin position="295"/>
        <end position="306"/>
    </location>
</feature>
<feature type="sequence variant" id="VAR_035890" description="In a breast cancer sample; somatic mutation." evidence="2">
    <original>S</original>
    <variation>C</variation>
    <location>
        <position position="60"/>
    </location>
</feature>
<feature type="sequence variant" id="VAR_033810" description="In dbSNP:rs1048032.">
    <original>H</original>
    <variation>P</variation>
    <location>
        <position position="338"/>
    </location>
</feature>